<sequence>MMRASYLFTSESVSEGHPDKVCDRISDEIVDLFYREGPKAGIDPWQIRAACETLATTNKVVIAGETRGPASVTNEHIEHVVREAIKDIGYEQAGFHWKTCDIEILLHPQSADIAQGVDALQPGEVKEEGAGDQGIMFGYACNETPDLMPAPIFYAHKILRLIAEARHSGVEKVLGPDSKSQVTVRYENGKPVGVREIVVSHQHLVEDMTSAQVRERVEPYVREALPKDWITKDTIWHINPTGKFFIGGPDGDTGLTGRKIIVDTYGGAAPHGGGAFSGKDPTKVDRSAAYAARYLAKNIVAAGLADRCTLQLAYAIGVARPLSIYIDTHGTGKVSEDKLEKAAAEVMNLTPRGIRSHLDLNRPIYARTAAYGHFGRTPDNEGGFSWEKTDLAEAFKRAV</sequence>
<organism>
    <name type="scientific">Bradyrhizobium sp. (strain BTAi1 / ATCC BAA-1182)</name>
    <dbReference type="NCBI Taxonomy" id="288000"/>
    <lineage>
        <taxon>Bacteria</taxon>
        <taxon>Pseudomonadati</taxon>
        <taxon>Pseudomonadota</taxon>
        <taxon>Alphaproteobacteria</taxon>
        <taxon>Hyphomicrobiales</taxon>
        <taxon>Nitrobacteraceae</taxon>
        <taxon>Bradyrhizobium</taxon>
    </lineage>
</organism>
<evidence type="ECO:0000255" key="1">
    <source>
        <dbReference type="HAMAP-Rule" id="MF_00086"/>
    </source>
</evidence>
<reference key="1">
    <citation type="journal article" date="2007" name="Science">
        <title>Legumes symbioses: absence of nod genes in photosynthetic bradyrhizobia.</title>
        <authorList>
            <person name="Giraud E."/>
            <person name="Moulin L."/>
            <person name="Vallenet D."/>
            <person name="Barbe V."/>
            <person name="Cytryn E."/>
            <person name="Avarre J.-C."/>
            <person name="Jaubert M."/>
            <person name="Simon D."/>
            <person name="Cartieaux F."/>
            <person name="Prin Y."/>
            <person name="Bena G."/>
            <person name="Hannibal L."/>
            <person name="Fardoux J."/>
            <person name="Kojadinovic M."/>
            <person name="Vuillet L."/>
            <person name="Lajus A."/>
            <person name="Cruveiller S."/>
            <person name="Rouy Z."/>
            <person name="Mangenot S."/>
            <person name="Segurens B."/>
            <person name="Dossat C."/>
            <person name="Franck W.L."/>
            <person name="Chang W.-S."/>
            <person name="Saunders E."/>
            <person name="Bruce D."/>
            <person name="Richardson P."/>
            <person name="Normand P."/>
            <person name="Dreyfus B."/>
            <person name="Pignol D."/>
            <person name="Stacey G."/>
            <person name="Emerich D."/>
            <person name="Vermeglio A."/>
            <person name="Medigue C."/>
            <person name="Sadowsky M."/>
        </authorList>
    </citation>
    <scope>NUCLEOTIDE SEQUENCE [LARGE SCALE GENOMIC DNA]</scope>
    <source>
        <strain>BTAi1 / ATCC BAA-1182</strain>
    </source>
</reference>
<name>METK_BRASB</name>
<feature type="chain" id="PRO_1000007925" description="S-adenosylmethionine synthase">
    <location>
        <begin position="1"/>
        <end position="399"/>
    </location>
</feature>
<feature type="region of interest" description="Flexible loop" evidence="1">
    <location>
        <begin position="109"/>
        <end position="119"/>
    </location>
</feature>
<feature type="binding site" description="in other chain" evidence="1">
    <location>
        <position position="17"/>
    </location>
    <ligand>
        <name>ATP</name>
        <dbReference type="ChEBI" id="CHEBI:30616"/>
        <note>ligand shared between two neighboring subunits</note>
    </ligand>
</feature>
<feature type="binding site" evidence="1">
    <location>
        <position position="19"/>
    </location>
    <ligand>
        <name>Mg(2+)</name>
        <dbReference type="ChEBI" id="CHEBI:18420"/>
    </ligand>
</feature>
<feature type="binding site" evidence="1">
    <location>
        <position position="52"/>
    </location>
    <ligand>
        <name>K(+)</name>
        <dbReference type="ChEBI" id="CHEBI:29103"/>
    </ligand>
</feature>
<feature type="binding site" description="in other chain" evidence="1">
    <location>
        <position position="65"/>
    </location>
    <ligand>
        <name>L-methionine</name>
        <dbReference type="ChEBI" id="CHEBI:57844"/>
        <note>ligand shared between two neighboring subunits</note>
    </ligand>
</feature>
<feature type="binding site" description="in other chain" evidence="1">
    <location>
        <position position="109"/>
    </location>
    <ligand>
        <name>L-methionine</name>
        <dbReference type="ChEBI" id="CHEBI:57844"/>
        <note>ligand shared between two neighboring subunits</note>
    </ligand>
</feature>
<feature type="binding site" description="in other chain" evidence="1">
    <location>
        <begin position="177"/>
        <end position="179"/>
    </location>
    <ligand>
        <name>ATP</name>
        <dbReference type="ChEBI" id="CHEBI:30616"/>
        <note>ligand shared between two neighboring subunits</note>
    </ligand>
</feature>
<feature type="binding site" description="in other chain" evidence="1">
    <location>
        <begin position="243"/>
        <end position="244"/>
    </location>
    <ligand>
        <name>ATP</name>
        <dbReference type="ChEBI" id="CHEBI:30616"/>
        <note>ligand shared between two neighboring subunits</note>
    </ligand>
</feature>
<feature type="binding site" evidence="1">
    <location>
        <position position="252"/>
    </location>
    <ligand>
        <name>ATP</name>
        <dbReference type="ChEBI" id="CHEBI:30616"/>
        <note>ligand shared between two neighboring subunits</note>
    </ligand>
</feature>
<feature type="binding site" evidence="1">
    <location>
        <position position="252"/>
    </location>
    <ligand>
        <name>L-methionine</name>
        <dbReference type="ChEBI" id="CHEBI:57844"/>
        <note>ligand shared between two neighboring subunits</note>
    </ligand>
</feature>
<feature type="binding site" description="in other chain" evidence="1">
    <location>
        <begin position="258"/>
        <end position="259"/>
    </location>
    <ligand>
        <name>ATP</name>
        <dbReference type="ChEBI" id="CHEBI:30616"/>
        <note>ligand shared between two neighboring subunits</note>
    </ligand>
</feature>
<feature type="binding site" evidence="1">
    <location>
        <position position="275"/>
    </location>
    <ligand>
        <name>ATP</name>
        <dbReference type="ChEBI" id="CHEBI:30616"/>
        <note>ligand shared between two neighboring subunits</note>
    </ligand>
</feature>
<feature type="binding site" evidence="1">
    <location>
        <position position="279"/>
    </location>
    <ligand>
        <name>ATP</name>
        <dbReference type="ChEBI" id="CHEBI:30616"/>
        <note>ligand shared between two neighboring subunits</note>
    </ligand>
</feature>
<feature type="binding site" description="in other chain" evidence="1">
    <location>
        <position position="283"/>
    </location>
    <ligand>
        <name>L-methionine</name>
        <dbReference type="ChEBI" id="CHEBI:57844"/>
        <note>ligand shared between two neighboring subunits</note>
    </ligand>
</feature>
<keyword id="KW-0067">ATP-binding</keyword>
<keyword id="KW-0963">Cytoplasm</keyword>
<keyword id="KW-0460">Magnesium</keyword>
<keyword id="KW-0479">Metal-binding</keyword>
<keyword id="KW-0547">Nucleotide-binding</keyword>
<keyword id="KW-0554">One-carbon metabolism</keyword>
<keyword id="KW-0630">Potassium</keyword>
<keyword id="KW-1185">Reference proteome</keyword>
<keyword id="KW-0808">Transferase</keyword>
<gene>
    <name evidence="1" type="primary">metK</name>
    <name type="ordered locus">BBta_5699</name>
</gene>
<proteinExistence type="inferred from homology"/>
<protein>
    <recommendedName>
        <fullName evidence="1">S-adenosylmethionine synthase</fullName>
        <shortName evidence="1">AdoMet synthase</shortName>
        <ecNumber evidence="1">2.5.1.6</ecNumber>
    </recommendedName>
    <alternativeName>
        <fullName evidence="1">MAT</fullName>
    </alternativeName>
    <alternativeName>
        <fullName evidence="1">Methionine adenosyltransferase</fullName>
    </alternativeName>
</protein>
<accession>A5ENA8</accession>
<dbReference type="EC" id="2.5.1.6" evidence="1"/>
<dbReference type="EMBL" id="CP000494">
    <property type="protein sequence ID" value="ABQ37652.1"/>
    <property type="molecule type" value="Genomic_DNA"/>
</dbReference>
<dbReference type="SMR" id="A5ENA8"/>
<dbReference type="STRING" id="288000.BBta_5699"/>
<dbReference type="KEGG" id="bbt:BBta_5699"/>
<dbReference type="eggNOG" id="COG0192">
    <property type="taxonomic scope" value="Bacteria"/>
</dbReference>
<dbReference type="HOGENOM" id="CLU_041802_1_1_5"/>
<dbReference type="UniPathway" id="UPA00315">
    <property type="reaction ID" value="UER00080"/>
</dbReference>
<dbReference type="Proteomes" id="UP000000246">
    <property type="component" value="Chromosome"/>
</dbReference>
<dbReference type="GO" id="GO:0005737">
    <property type="term" value="C:cytoplasm"/>
    <property type="evidence" value="ECO:0007669"/>
    <property type="project" value="UniProtKB-SubCell"/>
</dbReference>
<dbReference type="GO" id="GO:0005524">
    <property type="term" value="F:ATP binding"/>
    <property type="evidence" value="ECO:0007669"/>
    <property type="project" value="UniProtKB-UniRule"/>
</dbReference>
<dbReference type="GO" id="GO:0000287">
    <property type="term" value="F:magnesium ion binding"/>
    <property type="evidence" value="ECO:0007669"/>
    <property type="project" value="UniProtKB-UniRule"/>
</dbReference>
<dbReference type="GO" id="GO:0004478">
    <property type="term" value="F:methionine adenosyltransferase activity"/>
    <property type="evidence" value="ECO:0007669"/>
    <property type="project" value="UniProtKB-UniRule"/>
</dbReference>
<dbReference type="GO" id="GO:0006730">
    <property type="term" value="P:one-carbon metabolic process"/>
    <property type="evidence" value="ECO:0007669"/>
    <property type="project" value="UniProtKB-KW"/>
</dbReference>
<dbReference type="GO" id="GO:0006556">
    <property type="term" value="P:S-adenosylmethionine biosynthetic process"/>
    <property type="evidence" value="ECO:0007669"/>
    <property type="project" value="UniProtKB-UniRule"/>
</dbReference>
<dbReference type="CDD" id="cd18079">
    <property type="entry name" value="S-AdoMet_synt"/>
    <property type="match status" value="1"/>
</dbReference>
<dbReference type="FunFam" id="3.30.300.10:FF:000003">
    <property type="entry name" value="S-adenosylmethionine synthase"/>
    <property type="match status" value="1"/>
</dbReference>
<dbReference type="Gene3D" id="3.30.300.10">
    <property type="match status" value="3"/>
</dbReference>
<dbReference type="HAMAP" id="MF_00086">
    <property type="entry name" value="S_AdoMet_synth1"/>
    <property type="match status" value="1"/>
</dbReference>
<dbReference type="InterPro" id="IPR022631">
    <property type="entry name" value="ADOMET_SYNTHASE_CS"/>
</dbReference>
<dbReference type="InterPro" id="IPR022630">
    <property type="entry name" value="S-AdoMet_synt_C"/>
</dbReference>
<dbReference type="InterPro" id="IPR022629">
    <property type="entry name" value="S-AdoMet_synt_central"/>
</dbReference>
<dbReference type="InterPro" id="IPR022628">
    <property type="entry name" value="S-AdoMet_synt_N"/>
</dbReference>
<dbReference type="InterPro" id="IPR002133">
    <property type="entry name" value="S-AdoMet_synthetase"/>
</dbReference>
<dbReference type="InterPro" id="IPR022636">
    <property type="entry name" value="S-AdoMet_synthetase_sfam"/>
</dbReference>
<dbReference type="NCBIfam" id="TIGR01034">
    <property type="entry name" value="metK"/>
    <property type="match status" value="1"/>
</dbReference>
<dbReference type="PANTHER" id="PTHR11964">
    <property type="entry name" value="S-ADENOSYLMETHIONINE SYNTHETASE"/>
    <property type="match status" value="1"/>
</dbReference>
<dbReference type="Pfam" id="PF02773">
    <property type="entry name" value="S-AdoMet_synt_C"/>
    <property type="match status" value="1"/>
</dbReference>
<dbReference type="Pfam" id="PF02772">
    <property type="entry name" value="S-AdoMet_synt_M"/>
    <property type="match status" value="1"/>
</dbReference>
<dbReference type="Pfam" id="PF00438">
    <property type="entry name" value="S-AdoMet_synt_N"/>
    <property type="match status" value="1"/>
</dbReference>
<dbReference type="PIRSF" id="PIRSF000497">
    <property type="entry name" value="MAT"/>
    <property type="match status" value="1"/>
</dbReference>
<dbReference type="SUPFAM" id="SSF55973">
    <property type="entry name" value="S-adenosylmethionine synthetase"/>
    <property type="match status" value="3"/>
</dbReference>
<dbReference type="PROSITE" id="PS00376">
    <property type="entry name" value="ADOMET_SYNTHASE_1"/>
    <property type="match status" value="1"/>
</dbReference>
<dbReference type="PROSITE" id="PS00377">
    <property type="entry name" value="ADOMET_SYNTHASE_2"/>
    <property type="match status" value="1"/>
</dbReference>
<comment type="function">
    <text evidence="1">Catalyzes the formation of S-adenosylmethionine (AdoMet) from methionine and ATP. The overall synthetic reaction is composed of two sequential steps, AdoMet formation and the subsequent tripolyphosphate hydrolysis which occurs prior to release of AdoMet from the enzyme.</text>
</comment>
<comment type="catalytic activity">
    <reaction evidence="1">
        <text>L-methionine + ATP + H2O = S-adenosyl-L-methionine + phosphate + diphosphate</text>
        <dbReference type="Rhea" id="RHEA:21080"/>
        <dbReference type="ChEBI" id="CHEBI:15377"/>
        <dbReference type="ChEBI" id="CHEBI:30616"/>
        <dbReference type="ChEBI" id="CHEBI:33019"/>
        <dbReference type="ChEBI" id="CHEBI:43474"/>
        <dbReference type="ChEBI" id="CHEBI:57844"/>
        <dbReference type="ChEBI" id="CHEBI:59789"/>
        <dbReference type="EC" id="2.5.1.6"/>
    </reaction>
</comment>
<comment type="cofactor">
    <cofactor evidence="1">
        <name>Mg(2+)</name>
        <dbReference type="ChEBI" id="CHEBI:18420"/>
    </cofactor>
    <text evidence="1">Binds 2 divalent ions per subunit.</text>
</comment>
<comment type="cofactor">
    <cofactor evidence="1">
        <name>K(+)</name>
        <dbReference type="ChEBI" id="CHEBI:29103"/>
    </cofactor>
    <text evidence="1">Binds 1 potassium ion per subunit.</text>
</comment>
<comment type="pathway">
    <text evidence="1">Amino-acid biosynthesis; S-adenosyl-L-methionine biosynthesis; S-adenosyl-L-methionine from L-methionine: step 1/1.</text>
</comment>
<comment type="subunit">
    <text evidence="1">Homotetramer; dimer of dimers.</text>
</comment>
<comment type="subcellular location">
    <subcellularLocation>
        <location evidence="1">Cytoplasm</location>
    </subcellularLocation>
</comment>
<comment type="similarity">
    <text evidence="1">Belongs to the AdoMet synthase family.</text>
</comment>